<gene>
    <name type="primary">MET4</name>
    <name type="synonym">DMT2</name>
    <name type="synonym">MET2</name>
    <name type="synonym">METIIa</name>
    <name type="ordered locus">At4g14140</name>
    <name type="ORF">dl3110w</name>
</gene>
<protein>
    <recommendedName>
        <fullName>DNA (cytosine-5)-methyltransferase 4</fullName>
        <ecNumber>2.1.1.37</ecNumber>
    </recommendedName>
    <alternativeName>
        <fullName>DNA methyltransferase 4</fullName>
    </alternativeName>
    <alternativeName>
        <fullName>DNA methyltransferase IIa</fullName>
        <shortName>DMT02</shortName>
        <shortName>MET02</shortName>
    </alternativeName>
</protein>
<keyword id="KW-0025">Alternative splicing</keyword>
<keyword id="KW-0156">Chromatin regulator</keyword>
<keyword id="KW-0238">DNA-binding</keyword>
<keyword id="KW-1017">Isopeptide bond</keyword>
<keyword id="KW-0489">Methyltransferase</keyword>
<keyword id="KW-0539">Nucleus</keyword>
<keyword id="KW-1185">Reference proteome</keyword>
<keyword id="KW-0677">Repeat</keyword>
<keyword id="KW-0949">S-adenosyl-L-methionine</keyword>
<keyword id="KW-0808">Transferase</keyword>
<keyword id="KW-0832">Ubl conjugation</keyword>
<reference key="1">
    <citation type="journal article" date="1999" name="Plant Mol. Biol.">
        <title>Multiple DNA methyltransferase genes in Arabidopsis thaliana.</title>
        <authorList>
            <person name="Genger R.K."/>
            <person name="Kovac K.A."/>
            <person name="Dennis E.S."/>
            <person name="Peacock W.J."/>
            <person name="Finnegan E.J."/>
        </authorList>
    </citation>
    <scope>NUCLEOTIDE SEQUENCE [GENOMIC DNA]</scope>
    <scope>TISSUE SPECIFICITY</scope>
    <scope>GENE FAMILY</scope>
    <source>
        <strain>cv. Columbia</strain>
    </source>
</reference>
<reference key="2">
    <citation type="journal article" date="1998" name="Nature">
        <title>Analysis of 1.9 Mb of contiguous sequence from chromosome 4 of Arabidopsis thaliana.</title>
        <authorList>
            <person name="Bevan M."/>
            <person name="Bancroft I."/>
            <person name="Bent E."/>
            <person name="Love K."/>
            <person name="Goodman H.M."/>
            <person name="Dean C."/>
            <person name="Bergkamp R."/>
            <person name="Dirkse W."/>
            <person name="van Staveren M."/>
            <person name="Stiekema W."/>
            <person name="Drost L."/>
            <person name="Ridley P."/>
            <person name="Hudson S.-A."/>
            <person name="Patel K."/>
            <person name="Murphy G."/>
            <person name="Piffanelli P."/>
            <person name="Wedler H."/>
            <person name="Wedler E."/>
            <person name="Wambutt R."/>
            <person name="Weitzenegger T."/>
            <person name="Pohl T."/>
            <person name="Terryn N."/>
            <person name="Gielen J."/>
            <person name="Villarroel R."/>
            <person name="De Clercq R."/>
            <person name="van Montagu M."/>
            <person name="Lecharny A."/>
            <person name="Aubourg S."/>
            <person name="Gy I."/>
            <person name="Kreis M."/>
            <person name="Lao N."/>
            <person name="Kavanagh T."/>
            <person name="Hempel S."/>
            <person name="Kotter P."/>
            <person name="Entian K.-D."/>
            <person name="Rieger M."/>
            <person name="Schaefer M."/>
            <person name="Funk B."/>
            <person name="Mueller-Auer S."/>
            <person name="Silvey M."/>
            <person name="James R."/>
            <person name="Monfort A."/>
            <person name="Pons A."/>
            <person name="Puigdomenech P."/>
            <person name="Douka A."/>
            <person name="Voukelatou E."/>
            <person name="Milioni D."/>
            <person name="Hatzopoulos P."/>
            <person name="Piravandi E."/>
            <person name="Obermaier B."/>
            <person name="Hilbert H."/>
            <person name="Duesterhoeft A."/>
            <person name="Moores T."/>
            <person name="Jones J.D.G."/>
            <person name="Eneva T."/>
            <person name="Palme K."/>
            <person name="Benes V."/>
            <person name="Rechmann S."/>
            <person name="Ansorge W."/>
            <person name="Cooke R."/>
            <person name="Berger C."/>
            <person name="Delseny M."/>
            <person name="Voet M."/>
            <person name="Volckaert G."/>
            <person name="Mewes H.-W."/>
            <person name="Klosterman S."/>
            <person name="Schueller C."/>
            <person name="Chalwatzis N."/>
        </authorList>
    </citation>
    <scope>NUCLEOTIDE SEQUENCE [LARGE SCALE GENOMIC DNA]</scope>
    <source>
        <strain>cv. Columbia</strain>
    </source>
</reference>
<reference key="3">
    <citation type="journal article" date="1999" name="Nature">
        <title>Sequence and analysis of chromosome 4 of the plant Arabidopsis thaliana.</title>
        <authorList>
            <person name="Mayer K.F.X."/>
            <person name="Schueller C."/>
            <person name="Wambutt R."/>
            <person name="Murphy G."/>
            <person name="Volckaert G."/>
            <person name="Pohl T."/>
            <person name="Duesterhoeft A."/>
            <person name="Stiekema W."/>
            <person name="Entian K.-D."/>
            <person name="Terryn N."/>
            <person name="Harris B."/>
            <person name="Ansorge W."/>
            <person name="Brandt P."/>
            <person name="Grivell L.A."/>
            <person name="Rieger M."/>
            <person name="Weichselgartner M."/>
            <person name="de Simone V."/>
            <person name="Obermaier B."/>
            <person name="Mache R."/>
            <person name="Mueller M."/>
            <person name="Kreis M."/>
            <person name="Delseny M."/>
            <person name="Puigdomenech P."/>
            <person name="Watson M."/>
            <person name="Schmidtheini T."/>
            <person name="Reichert B."/>
            <person name="Portetelle D."/>
            <person name="Perez-Alonso M."/>
            <person name="Boutry M."/>
            <person name="Bancroft I."/>
            <person name="Vos P."/>
            <person name="Hoheisel J."/>
            <person name="Zimmermann W."/>
            <person name="Wedler H."/>
            <person name="Ridley P."/>
            <person name="Langham S.-A."/>
            <person name="McCullagh B."/>
            <person name="Bilham L."/>
            <person name="Robben J."/>
            <person name="van der Schueren J."/>
            <person name="Grymonprez B."/>
            <person name="Chuang Y.-J."/>
            <person name="Vandenbussche F."/>
            <person name="Braeken M."/>
            <person name="Weltjens I."/>
            <person name="Voet M."/>
            <person name="Bastiaens I."/>
            <person name="Aert R."/>
            <person name="Defoor E."/>
            <person name="Weitzenegger T."/>
            <person name="Bothe G."/>
            <person name="Ramsperger U."/>
            <person name="Hilbert H."/>
            <person name="Braun M."/>
            <person name="Holzer E."/>
            <person name="Brandt A."/>
            <person name="Peters S."/>
            <person name="van Staveren M."/>
            <person name="Dirkse W."/>
            <person name="Mooijman P."/>
            <person name="Klein Lankhorst R."/>
            <person name="Rose M."/>
            <person name="Hauf J."/>
            <person name="Koetter P."/>
            <person name="Berneiser S."/>
            <person name="Hempel S."/>
            <person name="Feldpausch M."/>
            <person name="Lamberth S."/>
            <person name="Van den Daele H."/>
            <person name="De Keyser A."/>
            <person name="Buysshaert C."/>
            <person name="Gielen J."/>
            <person name="Villarroel R."/>
            <person name="De Clercq R."/>
            <person name="van Montagu M."/>
            <person name="Rogers J."/>
            <person name="Cronin A."/>
            <person name="Quail M.A."/>
            <person name="Bray-Allen S."/>
            <person name="Clark L."/>
            <person name="Doggett J."/>
            <person name="Hall S."/>
            <person name="Kay M."/>
            <person name="Lennard N."/>
            <person name="McLay K."/>
            <person name="Mayes R."/>
            <person name="Pettett A."/>
            <person name="Rajandream M.A."/>
            <person name="Lyne M."/>
            <person name="Benes V."/>
            <person name="Rechmann S."/>
            <person name="Borkova D."/>
            <person name="Bloecker H."/>
            <person name="Scharfe M."/>
            <person name="Grimm M."/>
            <person name="Loehnert T.-H."/>
            <person name="Dose S."/>
            <person name="de Haan M."/>
            <person name="Maarse A.C."/>
            <person name="Schaefer M."/>
            <person name="Mueller-Auer S."/>
            <person name="Gabel C."/>
            <person name="Fuchs M."/>
            <person name="Fartmann B."/>
            <person name="Granderath K."/>
            <person name="Dauner D."/>
            <person name="Herzl A."/>
            <person name="Neumann S."/>
            <person name="Argiriou A."/>
            <person name="Vitale D."/>
            <person name="Liguori R."/>
            <person name="Piravandi E."/>
            <person name="Massenet O."/>
            <person name="Quigley F."/>
            <person name="Clabauld G."/>
            <person name="Muendlein A."/>
            <person name="Felber R."/>
            <person name="Schnabl S."/>
            <person name="Hiller R."/>
            <person name="Schmidt W."/>
            <person name="Lecharny A."/>
            <person name="Aubourg S."/>
            <person name="Chefdor F."/>
            <person name="Cooke R."/>
            <person name="Berger C."/>
            <person name="Monfort A."/>
            <person name="Casacuberta E."/>
            <person name="Gibbons T."/>
            <person name="Weber N."/>
            <person name="Vandenbol M."/>
            <person name="Bargues M."/>
            <person name="Terol J."/>
            <person name="Torres A."/>
            <person name="Perez-Perez A."/>
            <person name="Purnelle B."/>
            <person name="Bent E."/>
            <person name="Johnson S."/>
            <person name="Tacon D."/>
            <person name="Jesse T."/>
            <person name="Heijnen L."/>
            <person name="Schwarz S."/>
            <person name="Scholler P."/>
            <person name="Heber S."/>
            <person name="Francs P."/>
            <person name="Bielke C."/>
            <person name="Frishman D."/>
            <person name="Haase D."/>
            <person name="Lemcke K."/>
            <person name="Mewes H.-W."/>
            <person name="Stocker S."/>
            <person name="Zaccaria P."/>
            <person name="Bevan M."/>
            <person name="Wilson R.K."/>
            <person name="de la Bastide M."/>
            <person name="Habermann K."/>
            <person name="Parnell L."/>
            <person name="Dedhia N."/>
            <person name="Gnoj L."/>
            <person name="Schutz K."/>
            <person name="Huang E."/>
            <person name="Spiegel L."/>
            <person name="Sekhon M."/>
            <person name="Murray J."/>
            <person name="Sheet P."/>
            <person name="Cordes M."/>
            <person name="Abu-Threideh J."/>
            <person name="Stoneking T."/>
            <person name="Kalicki J."/>
            <person name="Graves T."/>
            <person name="Harmon G."/>
            <person name="Edwards J."/>
            <person name="Latreille P."/>
            <person name="Courtney L."/>
            <person name="Cloud J."/>
            <person name="Abbott A."/>
            <person name="Scott K."/>
            <person name="Johnson D."/>
            <person name="Minx P."/>
            <person name="Bentley D."/>
            <person name="Fulton B."/>
            <person name="Miller N."/>
            <person name="Greco T."/>
            <person name="Kemp K."/>
            <person name="Kramer J."/>
            <person name="Fulton L."/>
            <person name="Mardis E."/>
            <person name="Dante M."/>
            <person name="Pepin K."/>
            <person name="Hillier L.W."/>
            <person name="Nelson J."/>
            <person name="Spieth J."/>
            <person name="Ryan E."/>
            <person name="Andrews S."/>
            <person name="Geisel C."/>
            <person name="Layman D."/>
            <person name="Du H."/>
            <person name="Ali J."/>
            <person name="Berghoff A."/>
            <person name="Jones K."/>
            <person name="Drone K."/>
            <person name="Cotton M."/>
            <person name="Joshu C."/>
            <person name="Antonoiu B."/>
            <person name="Zidanic M."/>
            <person name="Strong C."/>
            <person name="Sun H."/>
            <person name="Lamar B."/>
            <person name="Yordan C."/>
            <person name="Ma P."/>
            <person name="Zhong J."/>
            <person name="Preston R."/>
            <person name="Vil D."/>
            <person name="Shekher M."/>
            <person name="Matero A."/>
            <person name="Shah R."/>
            <person name="Swaby I.K."/>
            <person name="O'Shaughnessy A."/>
            <person name="Rodriguez M."/>
            <person name="Hoffman J."/>
            <person name="Till S."/>
            <person name="Granat S."/>
            <person name="Shohdy N."/>
            <person name="Hasegawa A."/>
            <person name="Hameed A."/>
            <person name="Lodhi M."/>
            <person name="Johnson A."/>
            <person name="Chen E."/>
            <person name="Marra M.A."/>
            <person name="Martienssen R."/>
            <person name="McCombie W.R."/>
        </authorList>
    </citation>
    <scope>NUCLEOTIDE SEQUENCE [LARGE SCALE GENOMIC DNA]</scope>
    <source>
        <strain>cv. Columbia</strain>
    </source>
</reference>
<reference key="4">
    <citation type="journal article" date="2017" name="Plant J.">
        <title>Araport11: a complete reannotation of the Arabidopsis thaliana reference genome.</title>
        <authorList>
            <person name="Cheng C.Y."/>
            <person name="Krishnakumar V."/>
            <person name="Chan A.P."/>
            <person name="Thibaud-Nissen F."/>
            <person name="Schobel S."/>
            <person name="Town C.D."/>
        </authorList>
    </citation>
    <scope>GENOME REANNOTATION</scope>
    <source>
        <strain>cv. Columbia</strain>
    </source>
</reference>
<reference key="5">
    <citation type="journal article" date="2009" name="Plant J.">
        <title>Tandem affinity purification and mass spectrometric analysis of ubiquitylated proteins in Arabidopsis.</title>
        <authorList>
            <person name="Saracco S.A."/>
            <person name="Hansson M."/>
            <person name="Scalf M."/>
            <person name="Walker J.M."/>
            <person name="Smith L.M."/>
            <person name="Vierstra R.D."/>
        </authorList>
    </citation>
    <scope>UBIQUITINATION [LARGE SCALE ANALYSIS] AT LYS-583</scope>
    <scope>IDENTIFICATION BY MASS SPECTROMETRY</scope>
</reference>
<reference key="6">
    <citation type="journal article" date="2011" name="Proc. Natl. Acad. Sci. U.S.A.">
        <title>Regulation of imprinted gene expression in Arabidopsis endosperm.</title>
        <authorList>
            <person name="Hsieh T.-F."/>
            <person name="Shin J."/>
            <person name="Uzawa R."/>
            <person name="Silva P."/>
            <person name="Cohen S."/>
            <person name="Bauer M.J."/>
            <person name="Hashimoto M."/>
            <person name="Kirkbride R.C."/>
            <person name="Harada J.J."/>
            <person name="Zilberman D."/>
            <person name="Fischer R.L."/>
        </authorList>
    </citation>
    <scope>GENE FAMILY</scope>
    <scope>NOMENCLATURE</scope>
</reference>
<comment type="function">
    <text evidence="1">Maintains chromatin CpG methylation that plays a role in genomic imprinting, regulation of embryogenesis and seed viability. Required for proper patterns of CG DNA methylation in dividing cells (By similarity).</text>
</comment>
<comment type="catalytic activity">
    <reaction evidence="4">
        <text>a 2'-deoxycytidine in DNA + S-adenosyl-L-methionine = a 5-methyl-2'-deoxycytidine in DNA + S-adenosyl-L-homocysteine + H(+)</text>
        <dbReference type="Rhea" id="RHEA:13681"/>
        <dbReference type="Rhea" id="RHEA-COMP:11369"/>
        <dbReference type="Rhea" id="RHEA-COMP:11370"/>
        <dbReference type="ChEBI" id="CHEBI:15378"/>
        <dbReference type="ChEBI" id="CHEBI:57856"/>
        <dbReference type="ChEBI" id="CHEBI:59789"/>
        <dbReference type="ChEBI" id="CHEBI:85452"/>
        <dbReference type="ChEBI" id="CHEBI:85454"/>
        <dbReference type="EC" id="2.1.1.37"/>
    </reaction>
</comment>
<comment type="subcellular location">
    <subcellularLocation>
        <location evidence="8">Nucleus</location>
    </subcellularLocation>
</comment>
<comment type="alternative products">
    <event type="alternative splicing"/>
    <isoform>
        <id>O23273-1</id>
        <name>1</name>
        <sequence type="displayed"/>
    </isoform>
    <isoform>
        <id>O23273-2</id>
        <name>2</name>
        <sequence type="described" ref="VSP_055401"/>
    </isoform>
</comment>
<comment type="tissue specificity">
    <text evidence="6">Expressed at low levels in vegetative and floral organs.</text>
</comment>
<comment type="similarity">
    <text evidence="3">Belongs to the class I-like SAM-binding methyltransferase superfamily. C5-methyltransferase family.</text>
</comment>
<comment type="sequence caution" evidence="8">
    <conflict type="erroneous initiation">
        <sequence resource="EMBL-CDS" id="AAF14882"/>
    </conflict>
    <text>Truncated N-terminus.</text>
</comment>
<dbReference type="EC" id="2.1.1.37"/>
<dbReference type="EMBL" id="AF138283">
    <property type="protein sequence ID" value="AAF14882.1"/>
    <property type="status" value="ALT_INIT"/>
    <property type="molecule type" value="Genomic_DNA"/>
</dbReference>
<dbReference type="EMBL" id="Z97335">
    <property type="protein sequence ID" value="CAB10193.1"/>
    <property type="molecule type" value="Genomic_DNA"/>
</dbReference>
<dbReference type="EMBL" id="AL161538">
    <property type="protein sequence ID" value="CAB78456.1"/>
    <property type="molecule type" value="Genomic_DNA"/>
</dbReference>
<dbReference type="EMBL" id="CP002687">
    <property type="protein sequence ID" value="AEE83379.1"/>
    <property type="molecule type" value="Genomic_DNA"/>
</dbReference>
<dbReference type="EMBL" id="CP002687">
    <property type="protein sequence ID" value="AEE83380.1"/>
    <property type="molecule type" value="Genomic_DNA"/>
</dbReference>
<dbReference type="EMBL" id="CP002687">
    <property type="protein sequence ID" value="ANM66066.1"/>
    <property type="molecule type" value="Genomic_DNA"/>
</dbReference>
<dbReference type="PIR" id="G71402">
    <property type="entry name" value="G71402"/>
</dbReference>
<dbReference type="RefSeq" id="NP_001190725.1">
    <molecule id="O23273-2"/>
    <property type="nucleotide sequence ID" value="NM_001203796.1"/>
</dbReference>
<dbReference type="RefSeq" id="NP_001319931.1">
    <molecule id="O23273-1"/>
    <property type="nucleotide sequence ID" value="NM_001340902.1"/>
</dbReference>
<dbReference type="RefSeq" id="NP_193150.1">
    <molecule id="O23273-1"/>
    <property type="nucleotide sequence ID" value="NM_117491.1"/>
</dbReference>
<dbReference type="SMR" id="O23273"/>
<dbReference type="BioGRID" id="12349">
    <property type="interactions" value="1"/>
</dbReference>
<dbReference type="FunCoup" id="O23273">
    <property type="interactions" value="2089"/>
</dbReference>
<dbReference type="STRING" id="3702.O23273"/>
<dbReference type="iPTMnet" id="O23273"/>
<dbReference type="PaxDb" id="3702-AT4G14140.2"/>
<dbReference type="ProteomicsDB" id="220528">
    <molecule id="O23273-1"/>
</dbReference>
<dbReference type="EnsemblPlants" id="AT4G14140.1">
    <molecule id="O23273-1"/>
    <property type="protein sequence ID" value="AT4G14140.1"/>
    <property type="gene ID" value="AT4G14140"/>
</dbReference>
<dbReference type="EnsemblPlants" id="AT4G14140.2">
    <molecule id="O23273-2"/>
    <property type="protein sequence ID" value="AT4G14140.2"/>
    <property type="gene ID" value="AT4G14140"/>
</dbReference>
<dbReference type="EnsemblPlants" id="AT4G14140.3">
    <molecule id="O23273-1"/>
    <property type="protein sequence ID" value="AT4G14140.3"/>
    <property type="gene ID" value="AT4G14140"/>
</dbReference>
<dbReference type="GeneID" id="827052"/>
<dbReference type="Gramene" id="AT4G14140.1">
    <molecule id="O23273-1"/>
    <property type="protein sequence ID" value="AT4G14140.1"/>
    <property type="gene ID" value="AT4G14140"/>
</dbReference>
<dbReference type="Gramene" id="AT4G14140.2">
    <molecule id="O23273-2"/>
    <property type="protein sequence ID" value="AT4G14140.2"/>
    <property type="gene ID" value="AT4G14140"/>
</dbReference>
<dbReference type="Gramene" id="AT4G14140.3">
    <molecule id="O23273-1"/>
    <property type="protein sequence ID" value="AT4G14140.3"/>
    <property type="gene ID" value="AT4G14140"/>
</dbReference>
<dbReference type="KEGG" id="ath:AT4G14140"/>
<dbReference type="Araport" id="AT4G14140"/>
<dbReference type="TAIR" id="AT4G14140">
    <property type="gene designation" value="DMT2"/>
</dbReference>
<dbReference type="eggNOG" id="ENOG502QPKK">
    <property type="taxonomic scope" value="Eukaryota"/>
</dbReference>
<dbReference type="HOGENOM" id="CLU_002247_0_0_1"/>
<dbReference type="InParanoid" id="O23273"/>
<dbReference type="OMA" id="ACEETEW"/>
<dbReference type="PhylomeDB" id="O23273"/>
<dbReference type="PRO" id="PR:O23273"/>
<dbReference type="Proteomes" id="UP000006548">
    <property type="component" value="Chromosome 4"/>
</dbReference>
<dbReference type="ExpressionAtlas" id="O23273">
    <property type="expression patterns" value="baseline and differential"/>
</dbReference>
<dbReference type="GO" id="GO:0005634">
    <property type="term" value="C:nucleus"/>
    <property type="evidence" value="ECO:0007669"/>
    <property type="project" value="UniProtKB-SubCell"/>
</dbReference>
<dbReference type="GO" id="GO:0003682">
    <property type="term" value="F:chromatin binding"/>
    <property type="evidence" value="ECO:0007669"/>
    <property type="project" value="InterPro"/>
</dbReference>
<dbReference type="GO" id="GO:0003886">
    <property type="term" value="F:DNA (cytosine-5-)-methyltransferase activity"/>
    <property type="evidence" value="ECO:0007669"/>
    <property type="project" value="UniProtKB-EC"/>
</dbReference>
<dbReference type="GO" id="GO:0003677">
    <property type="term" value="F:DNA binding"/>
    <property type="evidence" value="ECO:0007669"/>
    <property type="project" value="UniProtKB-KW"/>
</dbReference>
<dbReference type="GO" id="GO:0006346">
    <property type="term" value="P:DNA methylation-dependent constitutive heterochromatin formation"/>
    <property type="evidence" value="ECO:0007669"/>
    <property type="project" value="InterPro"/>
</dbReference>
<dbReference type="GO" id="GO:0009294">
    <property type="term" value="P:DNA-mediated transformation"/>
    <property type="evidence" value="ECO:0000315"/>
    <property type="project" value="TAIR"/>
</dbReference>
<dbReference type="GO" id="GO:0032259">
    <property type="term" value="P:methylation"/>
    <property type="evidence" value="ECO:0007669"/>
    <property type="project" value="UniProtKB-KW"/>
</dbReference>
<dbReference type="CDD" id="cd04708">
    <property type="entry name" value="BAH_plantDCM_II"/>
    <property type="match status" value="1"/>
</dbReference>
<dbReference type="FunFam" id="3.40.50.150:FF:000108">
    <property type="entry name" value="DNA (cytosine-5)-methyltransferase"/>
    <property type="match status" value="1"/>
</dbReference>
<dbReference type="FunFam" id="3.40.50.150:FF:000128">
    <property type="entry name" value="DNA (cytosine-5)-methyltransferase"/>
    <property type="match status" value="1"/>
</dbReference>
<dbReference type="FunFam" id="3.90.120.10:FF:000002">
    <property type="entry name" value="DNA (cytosine-5)-methyltransferase"/>
    <property type="match status" value="1"/>
</dbReference>
<dbReference type="FunFam" id="3.90.120.10:FF:000004">
    <property type="entry name" value="DNA (cytosine-5)-methyltransferase"/>
    <property type="match status" value="1"/>
</dbReference>
<dbReference type="FunFam" id="2.30.30.490:FF:000046">
    <property type="entry name" value="DNA (cytosine-5)-methyltransferase 3"/>
    <property type="match status" value="1"/>
</dbReference>
<dbReference type="Gene3D" id="2.30.30.490">
    <property type="match status" value="2"/>
</dbReference>
<dbReference type="Gene3D" id="3.90.120.10">
    <property type="entry name" value="DNA Methylase, subunit A, domain 2"/>
    <property type="match status" value="2"/>
</dbReference>
<dbReference type="Gene3D" id="3.40.50.150">
    <property type="entry name" value="Vaccinia Virus protein VP39"/>
    <property type="match status" value="1"/>
</dbReference>
<dbReference type="InterPro" id="IPR001025">
    <property type="entry name" value="BAH_dom"/>
</dbReference>
<dbReference type="InterPro" id="IPR043151">
    <property type="entry name" value="BAH_sf"/>
</dbReference>
<dbReference type="InterPro" id="IPR050390">
    <property type="entry name" value="C5-Methyltransferase"/>
</dbReference>
<dbReference type="InterPro" id="IPR018117">
    <property type="entry name" value="C5_DNA_meth_AS"/>
</dbReference>
<dbReference type="InterPro" id="IPR001525">
    <property type="entry name" value="C5_MeTfrase"/>
</dbReference>
<dbReference type="InterPro" id="IPR031303">
    <property type="entry name" value="C5_meth_CS"/>
</dbReference>
<dbReference type="InterPro" id="IPR022702">
    <property type="entry name" value="Cytosine_MeTrfase1_RFD"/>
</dbReference>
<dbReference type="InterPro" id="IPR017198">
    <property type="entry name" value="DNMT1-like"/>
</dbReference>
<dbReference type="InterPro" id="IPR029063">
    <property type="entry name" value="SAM-dependent_MTases_sf"/>
</dbReference>
<dbReference type="NCBIfam" id="TIGR00675">
    <property type="entry name" value="dcm"/>
    <property type="match status" value="1"/>
</dbReference>
<dbReference type="PANTHER" id="PTHR10629">
    <property type="entry name" value="CYTOSINE-SPECIFIC METHYLTRANSFERASE"/>
    <property type="match status" value="1"/>
</dbReference>
<dbReference type="PANTHER" id="PTHR10629:SF52">
    <property type="entry name" value="DNA (CYTOSINE-5)-METHYLTRANSFERASE 1"/>
    <property type="match status" value="1"/>
</dbReference>
<dbReference type="Pfam" id="PF01426">
    <property type="entry name" value="BAH"/>
    <property type="match status" value="2"/>
</dbReference>
<dbReference type="Pfam" id="PF00145">
    <property type="entry name" value="DNA_methylase"/>
    <property type="match status" value="2"/>
</dbReference>
<dbReference type="Pfam" id="PF12047">
    <property type="entry name" value="DNMT1-RFD"/>
    <property type="match status" value="2"/>
</dbReference>
<dbReference type="PIRSF" id="PIRSF037404">
    <property type="entry name" value="DNMT1"/>
    <property type="match status" value="1"/>
</dbReference>
<dbReference type="PRINTS" id="PR00105">
    <property type="entry name" value="C5METTRFRASE"/>
</dbReference>
<dbReference type="SMART" id="SM00439">
    <property type="entry name" value="BAH"/>
    <property type="match status" value="2"/>
</dbReference>
<dbReference type="SUPFAM" id="SSF53335">
    <property type="entry name" value="S-adenosyl-L-methionine-dependent methyltransferases"/>
    <property type="match status" value="1"/>
</dbReference>
<dbReference type="PROSITE" id="PS51038">
    <property type="entry name" value="BAH"/>
    <property type="match status" value="2"/>
</dbReference>
<dbReference type="PROSITE" id="PS00094">
    <property type="entry name" value="C5_MTASE_1"/>
    <property type="match status" value="1"/>
</dbReference>
<dbReference type="PROSITE" id="PS00095">
    <property type="entry name" value="C5_MTASE_2"/>
    <property type="match status" value="1"/>
</dbReference>
<dbReference type="PROSITE" id="PS51679">
    <property type="entry name" value="SAM_MT_C5"/>
    <property type="match status" value="1"/>
</dbReference>
<proteinExistence type="evidence at protein level"/>
<feature type="chain" id="PRO_0000430013" description="DNA (cytosine-5)-methyltransferase 4">
    <location>
        <begin position="1"/>
        <end position="1519"/>
    </location>
</feature>
<feature type="domain" description="BAH 1" evidence="2">
    <location>
        <begin position="715"/>
        <end position="849"/>
    </location>
</feature>
<feature type="domain" description="BAH 2" evidence="2">
    <location>
        <begin position="916"/>
        <end position="1033"/>
    </location>
</feature>
<feature type="domain" description="SAM-dependent MTase C5-type" evidence="3">
    <location>
        <begin position="1078"/>
        <end position="1512"/>
    </location>
</feature>
<feature type="region of interest" description="Disordered" evidence="5">
    <location>
        <begin position="1"/>
        <end position="31"/>
    </location>
</feature>
<feature type="region of interest" description="Disordered" evidence="5">
    <location>
        <begin position="641"/>
        <end position="668"/>
    </location>
</feature>
<feature type="compositionally biased region" description="Basic and acidic residues" evidence="5">
    <location>
        <begin position="1"/>
        <end position="24"/>
    </location>
</feature>
<feature type="compositionally biased region" description="Acidic residues" evidence="5">
    <location>
        <begin position="642"/>
        <end position="668"/>
    </location>
</feature>
<feature type="active site" evidence="3 4">
    <location>
        <position position="1183"/>
    </location>
</feature>
<feature type="cross-link" description="Glycyl lysine isopeptide (Lys-Gly) (interchain with G-Cter in ubiquitin)" evidence="7">
    <location>
        <position position="583"/>
    </location>
</feature>
<feature type="splice variant" id="VSP_055401" description="In isoform 2." evidence="8">
    <original>VSTTKWAIEYEEPAGHAFKQNHPEATVFVDNCNVILR</original>
    <variation>MYLYSHVMHILLSSKHLKTFIKMHVLCNKVYLLQSGRSSMKSQLVMRLNKTILKQRFLLTTAM</variation>
    <location>
        <begin position="1099"/>
        <end position="1135"/>
    </location>
</feature>
<name>DNMT4_ARATH</name>
<organism>
    <name type="scientific">Arabidopsis thaliana</name>
    <name type="common">Mouse-ear cress</name>
    <dbReference type="NCBI Taxonomy" id="3702"/>
    <lineage>
        <taxon>Eukaryota</taxon>
        <taxon>Viridiplantae</taxon>
        <taxon>Streptophyta</taxon>
        <taxon>Embryophyta</taxon>
        <taxon>Tracheophyta</taxon>
        <taxon>Spermatophyta</taxon>
        <taxon>Magnoliopsida</taxon>
        <taxon>eudicotyledons</taxon>
        <taxon>Gunneridae</taxon>
        <taxon>Pentapetalae</taxon>
        <taxon>rosids</taxon>
        <taxon>malvids</taxon>
        <taxon>Brassicales</taxon>
        <taxon>Brassicaceae</taxon>
        <taxon>Camelineae</taxon>
        <taxon>Arabidopsis</taxon>
    </lineage>
</organism>
<accession>O23273</accession>
<accession>F4JUL5</accession>
<accession>Q9SEG3</accession>
<evidence type="ECO:0000250" key="1"/>
<evidence type="ECO:0000255" key="2">
    <source>
        <dbReference type="PROSITE-ProRule" id="PRU00370"/>
    </source>
</evidence>
<evidence type="ECO:0000255" key="3">
    <source>
        <dbReference type="PROSITE-ProRule" id="PRU01016"/>
    </source>
</evidence>
<evidence type="ECO:0000255" key="4">
    <source>
        <dbReference type="PROSITE-ProRule" id="PRU10018"/>
    </source>
</evidence>
<evidence type="ECO:0000256" key="5">
    <source>
        <dbReference type="SAM" id="MobiDB-lite"/>
    </source>
</evidence>
<evidence type="ECO:0000269" key="6">
    <source>
    </source>
</evidence>
<evidence type="ECO:0000269" key="7">
    <source>
    </source>
</evidence>
<evidence type="ECO:0000305" key="8"/>
<sequence>MEMETKAGKQKKRSVDSDDDVSKERRPKRAAACTNFKEKSLRISDKSETVEAKKEQILAEEIVAIQLTSSLESNDDPRPNRRLTDFVLHDSEGVPQPVEMLELGDIFIEGVVLPLGDEKKEEKGVRFQSFGRVENWNISGYEDGSPVIWISTALADYDCRKPSKKYKKLYDYFFEKACACVEVFKSLSKNPDTSLDELLAAVSRSMSGSKIFSSGGAIQEFVISQGEFIYNQLAGLDETAKNHETCFVENRVLVSLRDHESNKIHKALSNVALRIDESKVVTSDHLVDGAEDEDVKYAKLIQEEEYRKSMERSRNKRSSTTSGGSSRFYIKISEDEIADDYPLPSYYKNTKEETDELVLFEAGYEVDTRDLPCRTLHNWTLYNSDSRMISLEVLPMRPCAEIDVTVFGSGVVAEDDGSGFCLDDSESSTSTQSNDHDGMNIFLSQIKEWMIEFGAEMIFVTLRTDMAWYRLGKPSKQYAPWFGTVMKTVRVGISIFNMLMRESRVAKLSYANVIKRLCGLEENDKAYISSKLLDVERYVVVHGQIILQLFEEYPDKDIKRCPFVTSLASKMQDIHHTKWIIKKKKKILQKGKNLNPRAGIAPVVSRMKAMQATTTRLVNRIWGEFYSIYSPEVPSEAINAENVEEEELEEVEEEDENEEDDPEENELEAVEIQNSPTPKKIKGISEDMEIKWDGEILGKTSAGEPLYGRAFVGGDVVVVGSAVILEVDDQDDTQLICFVEFMFESSNHSKMLHGKLLQRGSETVLGMAANERELFLTNECLTVQLKDIKGTVSLEIRSRLWGHQYRKENIDVDKLDRARAEERKTNGLPTDYYCKSLYSPERGGFFSLPRNDMGLGSGFCSSCKIRENEEERSKTKLNDSKTGFLSNGIEYHNGDFVYVLPNYITKDGLKKGSRRTTLKCGRNVGLKAFVVCQLLDVIVLEESRKASKASFQVKLTRFYRPEDISEEKAYASDIQELYYSQDTYILPPEAIQGKCEVRKKSDMPLCREYPILDHIFFCEVFYDSSTGYLKQFPANMKLKFSTIKDETLLREKKGKGVETGTSSGMLMKPDEVPKEKPLATLDIFAGCGGLSHGLENAGVSTTKWAIEYEEPAGHAFKQNHPEATVFVDNCNVILRAIMEKCGDVDDCVSTVEAAELAAKLDENQKSTLPLPGQVDFINGGPPCQGFSGMNRFSHGSWSKVQCEMILAFLSFADYFRPKYFLLENVKKFVTYNKGRTFQLTMASLLEMGYQVRFGILEAGTYGVSQPRKRVIIWAASPEEVLPEWPEPMHVFDNPGSKISLPRGLRYDAGCNTKFGAPFRSITVRDTIGDLPPVENGESKINKEYGTTPASWFQKKIRGNMSVLTDHICKGLNELNLIRCKKIPKRPGADWRDLPDENVTLSNGLVEKLRPLALSKTAKNHNEWKGLYGRLDWQGNLPISITDPQPMGKVGMCFHPEQDRIITVRECARSQGFPDSYEFSGTTKHKHRQIGNAVPPPLAFALGRKLKEALYLKSSLQHQS</sequence>